<evidence type="ECO:0000255" key="1">
    <source>
        <dbReference type="HAMAP-Rule" id="MF_00420"/>
    </source>
</evidence>
<protein>
    <recommendedName>
        <fullName evidence="1">Phosphoribosylformylglycinamidine synthase subunit PurL</fullName>
        <shortName evidence="1">FGAM synthase</shortName>
        <ecNumber evidence="1">6.3.5.3</ecNumber>
    </recommendedName>
    <alternativeName>
        <fullName evidence="1">Formylglycinamide ribonucleotide amidotransferase subunit II</fullName>
        <shortName evidence="1">FGAR amidotransferase II</shortName>
        <shortName evidence="1">FGAR-AT II</shortName>
    </alternativeName>
    <alternativeName>
        <fullName evidence="1">Glutamine amidotransferase PurL</fullName>
    </alternativeName>
    <alternativeName>
        <fullName evidence="1">Phosphoribosylformylglycinamidine synthase subunit II</fullName>
    </alternativeName>
</protein>
<name>PURL_RHIJ3</name>
<feature type="chain" id="PRO_1000050341" description="Phosphoribosylformylglycinamidine synthase subunit PurL">
    <location>
        <begin position="1"/>
        <end position="744"/>
    </location>
</feature>
<feature type="active site" evidence="1">
    <location>
        <position position="50"/>
    </location>
</feature>
<feature type="active site" description="Proton acceptor" evidence="1">
    <location>
        <position position="96"/>
    </location>
</feature>
<feature type="binding site" evidence="1">
    <location>
        <position position="53"/>
    </location>
    <ligand>
        <name>ATP</name>
        <dbReference type="ChEBI" id="CHEBI:30616"/>
    </ligand>
</feature>
<feature type="binding site" evidence="1">
    <location>
        <position position="92"/>
    </location>
    <ligand>
        <name>ATP</name>
        <dbReference type="ChEBI" id="CHEBI:30616"/>
    </ligand>
</feature>
<feature type="binding site" evidence="1">
    <location>
        <position position="94"/>
    </location>
    <ligand>
        <name>Mg(2+)</name>
        <dbReference type="ChEBI" id="CHEBI:18420"/>
        <label>1</label>
    </ligand>
</feature>
<feature type="binding site" evidence="1">
    <location>
        <begin position="95"/>
        <end position="98"/>
    </location>
    <ligand>
        <name>substrate</name>
    </ligand>
</feature>
<feature type="binding site" evidence="1">
    <location>
        <position position="117"/>
    </location>
    <ligand>
        <name>substrate</name>
    </ligand>
</feature>
<feature type="binding site" evidence="1">
    <location>
        <position position="118"/>
    </location>
    <ligand>
        <name>Mg(2+)</name>
        <dbReference type="ChEBI" id="CHEBI:18420"/>
        <label>2</label>
    </ligand>
</feature>
<feature type="binding site" evidence="1">
    <location>
        <position position="241"/>
    </location>
    <ligand>
        <name>substrate</name>
    </ligand>
</feature>
<feature type="binding site" evidence="1">
    <location>
        <position position="269"/>
    </location>
    <ligand>
        <name>Mg(2+)</name>
        <dbReference type="ChEBI" id="CHEBI:18420"/>
        <label>2</label>
    </ligand>
</feature>
<feature type="binding site" evidence="1">
    <location>
        <begin position="313"/>
        <end position="315"/>
    </location>
    <ligand>
        <name>substrate</name>
    </ligand>
</feature>
<feature type="binding site" evidence="1">
    <location>
        <position position="495"/>
    </location>
    <ligand>
        <name>ATP</name>
        <dbReference type="ChEBI" id="CHEBI:30616"/>
    </ligand>
</feature>
<feature type="binding site" evidence="1">
    <location>
        <position position="532"/>
    </location>
    <ligand>
        <name>ATP</name>
        <dbReference type="ChEBI" id="CHEBI:30616"/>
    </ligand>
</feature>
<feature type="binding site" evidence="1">
    <location>
        <position position="533"/>
    </location>
    <ligand>
        <name>Mg(2+)</name>
        <dbReference type="ChEBI" id="CHEBI:18420"/>
        <label>1</label>
    </ligand>
</feature>
<feature type="binding site" evidence="1">
    <location>
        <position position="535"/>
    </location>
    <ligand>
        <name>substrate</name>
    </ligand>
</feature>
<sequence length="744" mass="79506">MTIPNTIPITPELIASHGLKPDEYQRILDLIGREPTFTELGIFSAMWNEHCSYKSSKKWLRTLPTKGPRVIQGPGENAGVVDIDDGDCVVFKMESHNHPSYIEPYQGAATGVGGILRDVFTMGARPIAAMNALRFGEPDHPKTRHLVSGVVSGVGGYGNSFGVPTVGGEVEFDARYNGNILVNAFAAGIAKSNAIFLSEAKGVGLPVVYLGAKTGRDGVGGATMASAEFDESIEEKRPTVQVGDPFTEKCLLEACLELMQTGAVIAIQDMGAAGLTCSAVEMGAKGDLGILLELDKVPVREERMTAYEMMLSESQERMLMVLQPEKEEEAKAIFVKWGLDFAIVGWTTDDLRFRVMHQGEEVANLPIKDLGDQAPEYDRPWRESGKRAPLPANLVAAPEDYGQALLQLVGSANQSSRRWVYEQYDTLIQGNSLQLPGGDAGVVRVDGHPSKALAFSSDVTPRYVEADPFEGGKQAVAECWRNITATGAEPLAATDNLNFGNPEKPEIMGQFVEAVKGIGEACRALDFPIVSGNVSLYNETNGVAILPTPTIAGVGLLPDWSKMARIGSANDGDKVIMIGVDGSHLGQSVYLRDVLSSSEGPAPEVDLFAERRNGDFVRSVIRNGQATACHDISSGGLAVALAEMAMASGKGLTIDLSEGKGEPHALLFGEDQARYVLTLPADVADFVCVNAEGGGVPFRRLGTVGGTALVVGDLISLPIQQLRDAHESWFPDFMEGRGELAAAE</sequence>
<dbReference type="EC" id="6.3.5.3" evidence="1"/>
<dbReference type="EMBL" id="AM236080">
    <property type="protein sequence ID" value="CAK08100.1"/>
    <property type="molecule type" value="Genomic_DNA"/>
</dbReference>
<dbReference type="RefSeq" id="WP_011652157.1">
    <property type="nucleotide sequence ID" value="NC_008380.1"/>
</dbReference>
<dbReference type="SMR" id="Q1MG23"/>
<dbReference type="EnsemblBacteria" id="CAK08100">
    <property type="protein sequence ID" value="CAK08100"/>
    <property type="gene ID" value="RL2612"/>
</dbReference>
<dbReference type="KEGG" id="rle:RL2612"/>
<dbReference type="eggNOG" id="COG0046">
    <property type="taxonomic scope" value="Bacteria"/>
</dbReference>
<dbReference type="HOGENOM" id="CLU_003100_0_1_5"/>
<dbReference type="UniPathway" id="UPA00074">
    <property type="reaction ID" value="UER00128"/>
</dbReference>
<dbReference type="Proteomes" id="UP000006575">
    <property type="component" value="Chromosome"/>
</dbReference>
<dbReference type="GO" id="GO:0005737">
    <property type="term" value="C:cytoplasm"/>
    <property type="evidence" value="ECO:0007669"/>
    <property type="project" value="UniProtKB-SubCell"/>
</dbReference>
<dbReference type="GO" id="GO:0005524">
    <property type="term" value="F:ATP binding"/>
    <property type="evidence" value="ECO:0007669"/>
    <property type="project" value="UniProtKB-UniRule"/>
</dbReference>
<dbReference type="GO" id="GO:0000287">
    <property type="term" value="F:magnesium ion binding"/>
    <property type="evidence" value="ECO:0007669"/>
    <property type="project" value="UniProtKB-UniRule"/>
</dbReference>
<dbReference type="GO" id="GO:0004642">
    <property type="term" value="F:phosphoribosylformylglycinamidine synthase activity"/>
    <property type="evidence" value="ECO:0007669"/>
    <property type="project" value="UniProtKB-UniRule"/>
</dbReference>
<dbReference type="GO" id="GO:0006189">
    <property type="term" value="P:'de novo' IMP biosynthetic process"/>
    <property type="evidence" value="ECO:0007669"/>
    <property type="project" value="UniProtKB-UniRule"/>
</dbReference>
<dbReference type="CDD" id="cd02203">
    <property type="entry name" value="PurL_repeat1"/>
    <property type="match status" value="1"/>
</dbReference>
<dbReference type="CDD" id="cd02204">
    <property type="entry name" value="PurL_repeat2"/>
    <property type="match status" value="1"/>
</dbReference>
<dbReference type="FunFam" id="3.30.1330.10:FF:000004">
    <property type="entry name" value="Phosphoribosylformylglycinamidine synthase subunit PurL"/>
    <property type="match status" value="1"/>
</dbReference>
<dbReference type="Gene3D" id="3.90.650.10">
    <property type="entry name" value="PurM-like C-terminal domain"/>
    <property type="match status" value="2"/>
</dbReference>
<dbReference type="Gene3D" id="3.30.1330.10">
    <property type="entry name" value="PurM-like, N-terminal domain"/>
    <property type="match status" value="2"/>
</dbReference>
<dbReference type="HAMAP" id="MF_00420">
    <property type="entry name" value="PurL_2"/>
    <property type="match status" value="1"/>
</dbReference>
<dbReference type="InterPro" id="IPR010074">
    <property type="entry name" value="PRibForGlyAmidine_synth_PurL"/>
</dbReference>
<dbReference type="InterPro" id="IPR041609">
    <property type="entry name" value="PurL_linker"/>
</dbReference>
<dbReference type="InterPro" id="IPR010918">
    <property type="entry name" value="PurM-like_C_dom"/>
</dbReference>
<dbReference type="InterPro" id="IPR036676">
    <property type="entry name" value="PurM-like_C_sf"/>
</dbReference>
<dbReference type="InterPro" id="IPR016188">
    <property type="entry name" value="PurM-like_N"/>
</dbReference>
<dbReference type="InterPro" id="IPR036921">
    <property type="entry name" value="PurM-like_N_sf"/>
</dbReference>
<dbReference type="NCBIfam" id="TIGR01736">
    <property type="entry name" value="FGAM_synth_II"/>
    <property type="match status" value="1"/>
</dbReference>
<dbReference type="NCBIfam" id="NF002290">
    <property type="entry name" value="PRK01213.1"/>
    <property type="match status" value="1"/>
</dbReference>
<dbReference type="PANTHER" id="PTHR43555">
    <property type="entry name" value="PHOSPHORIBOSYLFORMYLGLYCINAMIDINE SYNTHASE SUBUNIT PURL"/>
    <property type="match status" value="1"/>
</dbReference>
<dbReference type="PANTHER" id="PTHR43555:SF1">
    <property type="entry name" value="PHOSPHORIBOSYLFORMYLGLYCINAMIDINE SYNTHASE SUBUNIT PURL"/>
    <property type="match status" value="1"/>
</dbReference>
<dbReference type="Pfam" id="PF00586">
    <property type="entry name" value="AIRS"/>
    <property type="match status" value="2"/>
</dbReference>
<dbReference type="Pfam" id="PF02769">
    <property type="entry name" value="AIRS_C"/>
    <property type="match status" value="2"/>
</dbReference>
<dbReference type="Pfam" id="PF18072">
    <property type="entry name" value="FGAR-AT_linker"/>
    <property type="match status" value="1"/>
</dbReference>
<dbReference type="PIRSF" id="PIRSF001587">
    <property type="entry name" value="FGAM_synthase_II"/>
    <property type="match status" value="1"/>
</dbReference>
<dbReference type="SUPFAM" id="SSF56042">
    <property type="entry name" value="PurM C-terminal domain-like"/>
    <property type="match status" value="2"/>
</dbReference>
<dbReference type="SUPFAM" id="SSF55326">
    <property type="entry name" value="PurM N-terminal domain-like"/>
    <property type="match status" value="2"/>
</dbReference>
<organism>
    <name type="scientific">Rhizobium johnstonii (strain DSM 114642 / LMG 32736 / 3841)</name>
    <name type="common">Rhizobium leguminosarum bv. viciae</name>
    <dbReference type="NCBI Taxonomy" id="216596"/>
    <lineage>
        <taxon>Bacteria</taxon>
        <taxon>Pseudomonadati</taxon>
        <taxon>Pseudomonadota</taxon>
        <taxon>Alphaproteobacteria</taxon>
        <taxon>Hyphomicrobiales</taxon>
        <taxon>Rhizobiaceae</taxon>
        <taxon>Rhizobium/Agrobacterium group</taxon>
        <taxon>Rhizobium</taxon>
        <taxon>Rhizobium johnstonii</taxon>
    </lineage>
</organism>
<reference key="1">
    <citation type="journal article" date="2006" name="Genome Biol.">
        <title>The genome of Rhizobium leguminosarum has recognizable core and accessory components.</title>
        <authorList>
            <person name="Young J.P.W."/>
            <person name="Crossman L.C."/>
            <person name="Johnston A.W.B."/>
            <person name="Thomson N.R."/>
            <person name="Ghazoui Z.F."/>
            <person name="Hull K.H."/>
            <person name="Wexler M."/>
            <person name="Curson A.R.J."/>
            <person name="Todd J.D."/>
            <person name="Poole P.S."/>
            <person name="Mauchline T.H."/>
            <person name="East A.K."/>
            <person name="Quail M.A."/>
            <person name="Churcher C."/>
            <person name="Arrowsmith C."/>
            <person name="Cherevach I."/>
            <person name="Chillingworth T."/>
            <person name="Clarke K."/>
            <person name="Cronin A."/>
            <person name="Davis P."/>
            <person name="Fraser A."/>
            <person name="Hance Z."/>
            <person name="Hauser H."/>
            <person name="Jagels K."/>
            <person name="Moule S."/>
            <person name="Mungall K."/>
            <person name="Norbertczak H."/>
            <person name="Rabbinowitsch E."/>
            <person name="Sanders M."/>
            <person name="Simmonds M."/>
            <person name="Whitehead S."/>
            <person name="Parkhill J."/>
        </authorList>
    </citation>
    <scope>NUCLEOTIDE SEQUENCE [LARGE SCALE GENOMIC DNA]</scope>
    <source>
        <strain>DSM 114642 / LMG 32736 / 3841</strain>
    </source>
</reference>
<accession>Q1MG23</accession>
<keyword id="KW-0067">ATP-binding</keyword>
<keyword id="KW-0963">Cytoplasm</keyword>
<keyword id="KW-0436">Ligase</keyword>
<keyword id="KW-0460">Magnesium</keyword>
<keyword id="KW-0479">Metal-binding</keyword>
<keyword id="KW-0547">Nucleotide-binding</keyword>
<keyword id="KW-0658">Purine biosynthesis</keyword>
<comment type="function">
    <text evidence="1">Part of the phosphoribosylformylglycinamidine synthase complex involved in the purines biosynthetic pathway. Catalyzes the ATP-dependent conversion of formylglycinamide ribonucleotide (FGAR) and glutamine to yield formylglycinamidine ribonucleotide (FGAM) and glutamate. The FGAM synthase complex is composed of three subunits. PurQ produces an ammonia molecule by converting glutamine to glutamate. PurL transfers the ammonia molecule to FGAR to form FGAM in an ATP-dependent manner. PurS interacts with PurQ and PurL and is thought to assist in the transfer of the ammonia molecule from PurQ to PurL.</text>
</comment>
<comment type="catalytic activity">
    <reaction evidence="1">
        <text>N(2)-formyl-N(1)-(5-phospho-beta-D-ribosyl)glycinamide + L-glutamine + ATP + H2O = 2-formamido-N(1)-(5-O-phospho-beta-D-ribosyl)acetamidine + L-glutamate + ADP + phosphate + H(+)</text>
        <dbReference type="Rhea" id="RHEA:17129"/>
        <dbReference type="ChEBI" id="CHEBI:15377"/>
        <dbReference type="ChEBI" id="CHEBI:15378"/>
        <dbReference type="ChEBI" id="CHEBI:29985"/>
        <dbReference type="ChEBI" id="CHEBI:30616"/>
        <dbReference type="ChEBI" id="CHEBI:43474"/>
        <dbReference type="ChEBI" id="CHEBI:58359"/>
        <dbReference type="ChEBI" id="CHEBI:147286"/>
        <dbReference type="ChEBI" id="CHEBI:147287"/>
        <dbReference type="ChEBI" id="CHEBI:456216"/>
        <dbReference type="EC" id="6.3.5.3"/>
    </reaction>
</comment>
<comment type="pathway">
    <text evidence="1">Purine metabolism; IMP biosynthesis via de novo pathway; 5-amino-1-(5-phospho-D-ribosyl)imidazole from N(2)-formyl-N(1)-(5-phospho-D-ribosyl)glycinamide: step 1/2.</text>
</comment>
<comment type="subunit">
    <text evidence="1">Monomer. Part of the FGAM synthase complex composed of 1 PurL, 1 PurQ and 2 PurS subunits.</text>
</comment>
<comment type="subcellular location">
    <subcellularLocation>
        <location evidence="1">Cytoplasm</location>
    </subcellularLocation>
</comment>
<comment type="similarity">
    <text evidence="1">Belongs to the FGAMS family.</text>
</comment>
<proteinExistence type="inferred from homology"/>
<gene>
    <name evidence="1" type="primary">purL</name>
    <name type="ordered locus">RL2612</name>
</gene>